<accession>B5EZQ4</accession>
<organism>
    <name type="scientific">Salmonella agona (strain SL483)</name>
    <dbReference type="NCBI Taxonomy" id="454166"/>
    <lineage>
        <taxon>Bacteria</taxon>
        <taxon>Pseudomonadati</taxon>
        <taxon>Pseudomonadota</taxon>
        <taxon>Gammaproteobacteria</taxon>
        <taxon>Enterobacterales</taxon>
        <taxon>Enterobacteriaceae</taxon>
        <taxon>Salmonella</taxon>
    </lineage>
</organism>
<feature type="chain" id="PRO_1000188274" description="Erythronate-4-phosphate dehydrogenase">
    <location>
        <begin position="1"/>
        <end position="378"/>
    </location>
</feature>
<feature type="active site" evidence="1">
    <location>
        <position position="208"/>
    </location>
</feature>
<feature type="active site" evidence="1">
    <location>
        <position position="237"/>
    </location>
</feature>
<feature type="active site" description="Proton donor" evidence="1">
    <location>
        <position position="254"/>
    </location>
</feature>
<feature type="binding site" evidence="1">
    <location>
        <position position="45"/>
    </location>
    <ligand>
        <name>substrate</name>
    </ligand>
</feature>
<feature type="binding site" evidence="1">
    <location>
        <position position="66"/>
    </location>
    <ligand>
        <name>substrate</name>
    </ligand>
</feature>
<feature type="binding site" evidence="1">
    <location>
        <position position="146"/>
    </location>
    <ligand>
        <name>NAD(+)</name>
        <dbReference type="ChEBI" id="CHEBI:57540"/>
    </ligand>
</feature>
<feature type="binding site" evidence="1">
    <location>
        <position position="175"/>
    </location>
    <ligand>
        <name>NAD(+)</name>
        <dbReference type="ChEBI" id="CHEBI:57540"/>
    </ligand>
</feature>
<feature type="binding site" evidence="1">
    <location>
        <position position="232"/>
    </location>
    <ligand>
        <name>NAD(+)</name>
        <dbReference type="ChEBI" id="CHEBI:57540"/>
    </ligand>
</feature>
<feature type="binding site" evidence="1">
    <location>
        <position position="257"/>
    </location>
    <ligand>
        <name>NAD(+)</name>
        <dbReference type="ChEBI" id="CHEBI:57540"/>
    </ligand>
</feature>
<feature type="binding site" evidence="1">
    <location>
        <position position="258"/>
    </location>
    <ligand>
        <name>substrate</name>
    </ligand>
</feature>
<comment type="function">
    <text evidence="1">Catalyzes the oxidation of erythronate-4-phosphate to 3-hydroxy-2-oxo-4-phosphonooxybutanoate.</text>
</comment>
<comment type="catalytic activity">
    <reaction evidence="1">
        <text>4-phospho-D-erythronate + NAD(+) = (R)-3-hydroxy-2-oxo-4-phosphooxybutanoate + NADH + H(+)</text>
        <dbReference type="Rhea" id="RHEA:18829"/>
        <dbReference type="ChEBI" id="CHEBI:15378"/>
        <dbReference type="ChEBI" id="CHEBI:57540"/>
        <dbReference type="ChEBI" id="CHEBI:57945"/>
        <dbReference type="ChEBI" id="CHEBI:58538"/>
        <dbReference type="ChEBI" id="CHEBI:58766"/>
        <dbReference type="EC" id="1.1.1.290"/>
    </reaction>
</comment>
<comment type="pathway">
    <text evidence="1">Cofactor biosynthesis; pyridoxine 5'-phosphate biosynthesis; pyridoxine 5'-phosphate from D-erythrose 4-phosphate: step 2/5.</text>
</comment>
<comment type="subunit">
    <text evidence="1">Homodimer.</text>
</comment>
<comment type="subcellular location">
    <subcellularLocation>
        <location evidence="1">Cytoplasm</location>
    </subcellularLocation>
</comment>
<comment type="similarity">
    <text evidence="1">Belongs to the D-isomer specific 2-hydroxyacid dehydrogenase family. PdxB subfamily.</text>
</comment>
<sequence length="378" mass="41298">MKILVDENMPYARELFSRLGEVKAVPGRPIPVEELNHADALMVRSVTKVNESLLSGTPINFVGTATAGTDHVDEAWLKQAGIGFSAAPGCNAIAVVEYVFSALLMLAERDGFSLRDRTIGIVGVGNVGSRLQTRLEALGIRTLLCDPPRAARGDEGDFRTLDELVQEADVLTFHTPLYKDGPYKTLHLADETLIRRLKPGAILINACRGPVVDNAALLARLNAGQPLSVVLDVWEGEPDLNVALLEAVDIGTSHIAGYTLEGKARGTTQVFEAYSAFIGREQRVALETLLPAPEFGRITLHGPLDQPTLKRLAHLVYDVRRDDAPLRKVAGIPGEFDKLRKNYLERREWSSLYVMCDDETAAALLCKLGFNAVHHPAH</sequence>
<gene>
    <name evidence="1" type="primary">pdxB</name>
    <name type="ordered locus">SeAg_B2512</name>
</gene>
<evidence type="ECO:0000255" key="1">
    <source>
        <dbReference type="HAMAP-Rule" id="MF_01825"/>
    </source>
</evidence>
<keyword id="KW-0963">Cytoplasm</keyword>
<keyword id="KW-0520">NAD</keyword>
<keyword id="KW-0560">Oxidoreductase</keyword>
<keyword id="KW-0664">Pyridoxine biosynthesis</keyword>
<proteinExistence type="inferred from homology"/>
<dbReference type="EC" id="1.1.1.290" evidence="1"/>
<dbReference type="EMBL" id="CP001138">
    <property type="protein sequence ID" value="ACH48904.1"/>
    <property type="molecule type" value="Genomic_DNA"/>
</dbReference>
<dbReference type="RefSeq" id="WP_000699178.1">
    <property type="nucleotide sequence ID" value="NC_011149.1"/>
</dbReference>
<dbReference type="SMR" id="B5EZQ4"/>
<dbReference type="KEGG" id="sea:SeAg_B2512"/>
<dbReference type="HOGENOM" id="CLU_019796_4_0_6"/>
<dbReference type="UniPathway" id="UPA00244">
    <property type="reaction ID" value="UER00310"/>
</dbReference>
<dbReference type="Proteomes" id="UP000008819">
    <property type="component" value="Chromosome"/>
</dbReference>
<dbReference type="GO" id="GO:0005829">
    <property type="term" value="C:cytosol"/>
    <property type="evidence" value="ECO:0007669"/>
    <property type="project" value="TreeGrafter"/>
</dbReference>
<dbReference type="GO" id="GO:0033711">
    <property type="term" value="F:4-phosphoerythronate dehydrogenase activity"/>
    <property type="evidence" value="ECO:0007669"/>
    <property type="project" value="UniProtKB-EC"/>
</dbReference>
<dbReference type="GO" id="GO:0051287">
    <property type="term" value="F:NAD binding"/>
    <property type="evidence" value="ECO:0007669"/>
    <property type="project" value="InterPro"/>
</dbReference>
<dbReference type="GO" id="GO:0046983">
    <property type="term" value="F:protein dimerization activity"/>
    <property type="evidence" value="ECO:0007669"/>
    <property type="project" value="InterPro"/>
</dbReference>
<dbReference type="GO" id="GO:0036001">
    <property type="term" value="P:'de novo' pyridoxal 5'-phosphate biosynthetic process"/>
    <property type="evidence" value="ECO:0007669"/>
    <property type="project" value="TreeGrafter"/>
</dbReference>
<dbReference type="GO" id="GO:0008615">
    <property type="term" value="P:pyridoxine biosynthetic process"/>
    <property type="evidence" value="ECO:0007669"/>
    <property type="project" value="UniProtKB-UniRule"/>
</dbReference>
<dbReference type="CDD" id="cd12158">
    <property type="entry name" value="ErythrP_dh"/>
    <property type="match status" value="1"/>
</dbReference>
<dbReference type="FunFam" id="3.30.1370.170:FF:000001">
    <property type="entry name" value="Erythronate-4-phosphate dehydrogenase"/>
    <property type="match status" value="1"/>
</dbReference>
<dbReference type="FunFam" id="3.40.50.720:FF:000093">
    <property type="entry name" value="Erythronate-4-phosphate dehydrogenase"/>
    <property type="match status" value="1"/>
</dbReference>
<dbReference type="Gene3D" id="3.30.1370.170">
    <property type="match status" value="1"/>
</dbReference>
<dbReference type="Gene3D" id="3.40.50.720">
    <property type="entry name" value="NAD(P)-binding Rossmann-like Domain"/>
    <property type="match status" value="2"/>
</dbReference>
<dbReference type="HAMAP" id="MF_01825">
    <property type="entry name" value="PdxB"/>
    <property type="match status" value="1"/>
</dbReference>
<dbReference type="InterPro" id="IPR006139">
    <property type="entry name" value="D-isomer_2_OHA_DH_cat_dom"/>
</dbReference>
<dbReference type="InterPro" id="IPR029753">
    <property type="entry name" value="D-isomer_DH_CS"/>
</dbReference>
<dbReference type="InterPro" id="IPR029752">
    <property type="entry name" value="D-isomer_DH_CS1"/>
</dbReference>
<dbReference type="InterPro" id="IPR006140">
    <property type="entry name" value="D-isomer_DH_NAD-bd"/>
</dbReference>
<dbReference type="InterPro" id="IPR020921">
    <property type="entry name" value="Erythronate-4-P_DHase"/>
</dbReference>
<dbReference type="InterPro" id="IPR024531">
    <property type="entry name" value="Erythronate-4-P_DHase_dimer"/>
</dbReference>
<dbReference type="InterPro" id="IPR036291">
    <property type="entry name" value="NAD(P)-bd_dom_sf"/>
</dbReference>
<dbReference type="InterPro" id="IPR038251">
    <property type="entry name" value="PdxB_dimer_sf"/>
</dbReference>
<dbReference type="NCBIfam" id="NF001309">
    <property type="entry name" value="PRK00257.1"/>
    <property type="match status" value="1"/>
</dbReference>
<dbReference type="NCBIfam" id="NF011966">
    <property type="entry name" value="PRK15438.1"/>
    <property type="match status" value="1"/>
</dbReference>
<dbReference type="PANTHER" id="PTHR42938">
    <property type="entry name" value="FORMATE DEHYDROGENASE 1"/>
    <property type="match status" value="1"/>
</dbReference>
<dbReference type="PANTHER" id="PTHR42938:SF9">
    <property type="entry name" value="FORMATE DEHYDROGENASE 1"/>
    <property type="match status" value="1"/>
</dbReference>
<dbReference type="Pfam" id="PF00389">
    <property type="entry name" value="2-Hacid_dh"/>
    <property type="match status" value="1"/>
</dbReference>
<dbReference type="Pfam" id="PF02826">
    <property type="entry name" value="2-Hacid_dh_C"/>
    <property type="match status" value="1"/>
</dbReference>
<dbReference type="Pfam" id="PF11890">
    <property type="entry name" value="DUF3410"/>
    <property type="match status" value="1"/>
</dbReference>
<dbReference type="SUPFAM" id="SSF52283">
    <property type="entry name" value="Formate/glycerate dehydrogenase catalytic domain-like"/>
    <property type="match status" value="1"/>
</dbReference>
<dbReference type="SUPFAM" id="SSF51735">
    <property type="entry name" value="NAD(P)-binding Rossmann-fold domains"/>
    <property type="match status" value="1"/>
</dbReference>
<dbReference type="PROSITE" id="PS00065">
    <property type="entry name" value="D_2_HYDROXYACID_DH_1"/>
    <property type="match status" value="1"/>
</dbReference>
<dbReference type="PROSITE" id="PS00671">
    <property type="entry name" value="D_2_HYDROXYACID_DH_3"/>
    <property type="match status" value="1"/>
</dbReference>
<reference key="1">
    <citation type="journal article" date="2011" name="J. Bacteriol.">
        <title>Comparative genomics of 28 Salmonella enterica isolates: evidence for CRISPR-mediated adaptive sublineage evolution.</title>
        <authorList>
            <person name="Fricke W.F."/>
            <person name="Mammel M.K."/>
            <person name="McDermott P.F."/>
            <person name="Tartera C."/>
            <person name="White D.G."/>
            <person name="Leclerc J.E."/>
            <person name="Ravel J."/>
            <person name="Cebula T.A."/>
        </authorList>
    </citation>
    <scope>NUCLEOTIDE SEQUENCE [LARGE SCALE GENOMIC DNA]</scope>
    <source>
        <strain>SL483</strain>
    </source>
</reference>
<protein>
    <recommendedName>
        <fullName evidence="1">Erythronate-4-phosphate dehydrogenase</fullName>
        <ecNumber evidence="1">1.1.1.290</ecNumber>
    </recommendedName>
</protein>
<name>PDXB_SALA4</name>